<reference key="1">
    <citation type="submission" date="2008-06" db="EMBL/GenBank/DDBJ databases">
        <title>Genome and proteome analysis of A. pleuropneumoniae serotype 7.</title>
        <authorList>
            <person name="Linke B."/>
            <person name="Buettner F."/>
            <person name="Martinez-Arias R."/>
            <person name="Goesmann A."/>
            <person name="Baltes N."/>
            <person name="Tegetmeyer H."/>
            <person name="Singh M."/>
            <person name="Gerlach G.F."/>
        </authorList>
    </citation>
    <scope>NUCLEOTIDE SEQUENCE [LARGE SCALE GENOMIC DNA]</scope>
    <source>
        <strain>AP76</strain>
    </source>
</reference>
<organism>
    <name type="scientific">Actinobacillus pleuropneumoniae serotype 7 (strain AP76)</name>
    <dbReference type="NCBI Taxonomy" id="537457"/>
    <lineage>
        <taxon>Bacteria</taxon>
        <taxon>Pseudomonadati</taxon>
        <taxon>Pseudomonadota</taxon>
        <taxon>Gammaproteobacteria</taxon>
        <taxon>Pasteurellales</taxon>
        <taxon>Pasteurellaceae</taxon>
        <taxon>Actinobacillus</taxon>
    </lineage>
</organism>
<evidence type="ECO:0000255" key="1">
    <source>
        <dbReference type="HAMAP-Rule" id="MF_01235"/>
    </source>
</evidence>
<name>NANE_ACTP7</name>
<sequence length="229" mass="24161">MSKLSHSEVLNTIRNGLIASCQPVDDGPMDKPEIVAAMAQASLIGGAAGLRIEGVDNLKATRPTVKAPIIAIVKRDLPDSPVRITPFLQDIDDLAAAGADIIAVDGTDRVRPVTIEAALKRIHELGCLAMADCSTLAEGLYCQQLGFDIVGSTMSGYTGGEVPNEPDYQLVKDLKAAGCFVMAEGRYNSPQLAKTAIEIGADCVTVGSALTRLEHIVGWFADEIKTAKV</sequence>
<gene>
    <name evidence="1" type="primary">nanE</name>
    <name type="ordered locus">APP7_1837</name>
</gene>
<accession>B3GZ03</accession>
<dbReference type="EC" id="5.1.3.9" evidence="1"/>
<dbReference type="EMBL" id="CP001091">
    <property type="protein sequence ID" value="ACE62489.1"/>
    <property type="molecule type" value="Genomic_DNA"/>
</dbReference>
<dbReference type="RefSeq" id="WP_005599263.1">
    <property type="nucleotide sequence ID" value="NC_010939.1"/>
</dbReference>
<dbReference type="SMR" id="B3GZ03"/>
<dbReference type="KEGG" id="apa:APP7_1837"/>
<dbReference type="HOGENOM" id="CLU_086300_0_0_6"/>
<dbReference type="UniPathway" id="UPA00629">
    <property type="reaction ID" value="UER00682"/>
</dbReference>
<dbReference type="Proteomes" id="UP000001226">
    <property type="component" value="Chromosome"/>
</dbReference>
<dbReference type="GO" id="GO:0005829">
    <property type="term" value="C:cytosol"/>
    <property type="evidence" value="ECO:0007669"/>
    <property type="project" value="TreeGrafter"/>
</dbReference>
<dbReference type="GO" id="GO:0047465">
    <property type="term" value="F:N-acylglucosamine-6-phosphate 2-epimerase activity"/>
    <property type="evidence" value="ECO:0007669"/>
    <property type="project" value="UniProtKB-EC"/>
</dbReference>
<dbReference type="GO" id="GO:0005975">
    <property type="term" value="P:carbohydrate metabolic process"/>
    <property type="evidence" value="ECO:0007669"/>
    <property type="project" value="UniProtKB-UniRule"/>
</dbReference>
<dbReference type="GO" id="GO:0006053">
    <property type="term" value="P:N-acetylmannosamine catabolic process"/>
    <property type="evidence" value="ECO:0007669"/>
    <property type="project" value="TreeGrafter"/>
</dbReference>
<dbReference type="GO" id="GO:0019262">
    <property type="term" value="P:N-acetylneuraminate catabolic process"/>
    <property type="evidence" value="ECO:0007669"/>
    <property type="project" value="UniProtKB-UniRule"/>
</dbReference>
<dbReference type="CDD" id="cd04729">
    <property type="entry name" value="NanE"/>
    <property type="match status" value="1"/>
</dbReference>
<dbReference type="FunFam" id="3.20.20.70:FF:000035">
    <property type="entry name" value="Putative N-acetylmannosamine-6-phosphate 2-epimerase"/>
    <property type="match status" value="1"/>
</dbReference>
<dbReference type="Gene3D" id="3.20.20.70">
    <property type="entry name" value="Aldolase class I"/>
    <property type="match status" value="1"/>
</dbReference>
<dbReference type="HAMAP" id="MF_01235">
    <property type="entry name" value="ManNAc6P_epimer"/>
    <property type="match status" value="1"/>
</dbReference>
<dbReference type="InterPro" id="IPR013785">
    <property type="entry name" value="Aldolase_TIM"/>
</dbReference>
<dbReference type="InterPro" id="IPR007260">
    <property type="entry name" value="NanE"/>
</dbReference>
<dbReference type="InterPro" id="IPR011060">
    <property type="entry name" value="RibuloseP-bd_barrel"/>
</dbReference>
<dbReference type="NCBIfam" id="NF002231">
    <property type="entry name" value="PRK01130.1"/>
    <property type="match status" value="1"/>
</dbReference>
<dbReference type="PANTHER" id="PTHR36204">
    <property type="entry name" value="N-ACETYLMANNOSAMINE-6-PHOSPHATE 2-EPIMERASE-RELATED"/>
    <property type="match status" value="1"/>
</dbReference>
<dbReference type="PANTHER" id="PTHR36204:SF1">
    <property type="entry name" value="N-ACETYLMANNOSAMINE-6-PHOSPHATE 2-EPIMERASE-RELATED"/>
    <property type="match status" value="1"/>
</dbReference>
<dbReference type="Pfam" id="PF04131">
    <property type="entry name" value="NanE"/>
    <property type="match status" value="1"/>
</dbReference>
<dbReference type="SUPFAM" id="SSF51366">
    <property type="entry name" value="Ribulose-phoshate binding barrel"/>
    <property type="match status" value="1"/>
</dbReference>
<proteinExistence type="inferred from homology"/>
<comment type="function">
    <text evidence="1">Converts N-acetylmannosamine-6-phosphate (ManNAc-6-P) to N-acetylglucosamine-6-phosphate (GlcNAc-6-P).</text>
</comment>
<comment type="catalytic activity">
    <reaction evidence="1">
        <text>an N-acyl-D-glucosamine 6-phosphate = an N-acyl-D-mannosamine 6-phosphate</text>
        <dbReference type="Rhea" id="RHEA:23932"/>
        <dbReference type="ChEBI" id="CHEBI:57599"/>
        <dbReference type="ChEBI" id="CHEBI:57666"/>
        <dbReference type="EC" id="5.1.3.9"/>
    </reaction>
</comment>
<comment type="pathway">
    <text evidence="1">Amino-sugar metabolism; N-acetylneuraminate degradation; D-fructose 6-phosphate from N-acetylneuraminate: step 3/5.</text>
</comment>
<comment type="similarity">
    <text evidence="1">Belongs to the NanE family.</text>
</comment>
<keyword id="KW-0119">Carbohydrate metabolism</keyword>
<keyword id="KW-0413">Isomerase</keyword>
<protein>
    <recommendedName>
        <fullName evidence="1">Putative N-acetylmannosamine-6-phosphate 2-epimerase</fullName>
        <ecNumber evidence="1">5.1.3.9</ecNumber>
    </recommendedName>
    <alternativeName>
        <fullName evidence="1">ManNAc-6-P epimerase</fullName>
    </alternativeName>
</protein>
<feature type="chain" id="PRO_1000139700" description="Putative N-acetylmannosamine-6-phosphate 2-epimerase">
    <location>
        <begin position="1"/>
        <end position="229"/>
    </location>
</feature>